<dbReference type="EC" id="2.7.8.20"/>
<dbReference type="EMBL" id="U14003">
    <property type="protein sequence ID" value="AAA97258.1"/>
    <property type="status" value="ALT_INIT"/>
    <property type="molecule type" value="Genomic_DNA"/>
</dbReference>
<dbReference type="EMBL" id="U00096">
    <property type="protein sequence ID" value="AAC77315.2"/>
    <property type="molecule type" value="Genomic_DNA"/>
</dbReference>
<dbReference type="EMBL" id="AP009048">
    <property type="protein sequence ID" value="BAE78349.1"/>
    <property type="molecule type" value="Genomic_DNA"/>
</dbReference>
<dbReference type="PIR" id="S56586">
    <property type="entry name" value="S56586"/>
</dbReference>
<dbReference type="RefSeq" id="NP_418779.2">
    <property type="nucleotide sequence ID" value="NC_000913.3"/>
</dbReference>
<dbReference type="RefSeq" id="WP_001292679.1">
    <property type="nucleotide sequence ID" value="NZ_LN832404.1"/>
</dbReference>
<dbReference type="SMR" id="P39401"/>
<dbReference type="BioGRID" id="4261390">
    <property type="interactions" value="166"/>
</dbReference>
<dbReference type="DIP" id="DIP-10175N"/>
<dbReference type="FunCoup" id="P39401">
    <property type="interactions" value="34"/>
</dbReference>
<dbReference type="IntAct" id="P39401">
    <property type="interactions" value="1"/>
</dbReference>
<dbReference type="STRING" id="511145.b4359"/>
<dbReference type="jPOST" id="P39401"/>
<dbReference type="PaxDb" id="511145-b4359"/>
<dbReference type="EnsemblBacteria" id="AAC77315">
    <property type="protein sequence ID" value="AAC77315"/>
    <property type="gene ID" value="b4359"/>
</dbReference>
<dbReference type="GeneID" id="948888"/>
<dbReference type="KEGG" id="ecj:JW5794"/>
<dbReference type="KEGG" id="eco:b4359"/>
<dbReference type="KEGG" id="ecoc:C3026_23550"/>
<dbReference type="PATRIC" id="fig|1411691.4.peg.2327"/>
<dbReference type="EchoBASE" id="EB2476"/>
<dbReference type="eggNOG" id="COG1368">
    <property type="taxonomic scope" value="Bacteria"/>
</dbReference>
<dbReference type="HOGENOM" id="CLU_023986_1_0_6"/>
<dbReference type="InParanoid" id="P39401"/>
<dbReference type="OMA" id="AMNNTAY"/>
<dbReference type="OrthoDB" id="9760224at2"/>
<dbReference type="PhylomeDB" id="P39401"/>
<dbReference type="BioCyc" id="EcoCyc:PGLYCEROLTRANSI-MONOMER"/>
<dbReference type="BioCyc" id="MetaCyc:PGLYCEROLTRANSI-MONOMER"/>
<dbReference type="UniPathway" id="UPA00637"/>
<dbReference type="PRO" id="PR:P39401"/>
<dbReference type="Proteomes" id="UP000000625">
    <property type="component" value="Chromosome"/>
</dbReference>
<dbReference type="GO" id="GO:0016020">
    <property type="term" value="C:membrane"/>
    <property type="evidence" value="ECO:0000314"/>
    <property type="project" value="EcoCyc"/>
</dbReference>
<dbReference type="GO" id="GO:0005886">
    <property type="term" value="C:plasma membrane"/>
    <property type="evidence" value="ECO:0000314"/>
    <property type="project" value="EcoCyc"/>
</dbReference>
<dbReference type="GO" id="GO:0008960">
    <property type="term" value="F:phosphatidylglycerol-membrane-oligosaccharide glycerophosphotransferase activity"/>
    <property type="evidence" value="ECO:0000314"/>
    <property type="project" value="EcoCyc"/>
</dbReference>
<dbReference type="GO" id="GO:0016740">
    <property type="term" value="F:transferase activity"/>
    <property type="evidence" value="ECO:0000318"/>
    <property type="project" value="GO_Central"/>
</dbReference>
<dbReference type="GO" id="GO:0009250">
    <property type="term" value="P:glucan biosynthetic process"/>
    <property type="evidence" value="ECO:0007669"/>
    <property type="project" value="UniProtKB-UniRule"/>
</dbReference>
<dbReference type="CDD" id="cd16015">
    <property type="entry name" value="LTA_synthase"/>
    <property type="match status" value="1"/>
</dbReference>
<dbReference type="FunFam" id="3.40.720.10:FF:000009">
    <property type="entry name" value="Phosphoglycerol transferase I"/>
    <property type="match status" value="1"/>
</dbReference>
<dbReference type="Gene3D" id="3.40.720.10">
    <property type="entry name" value="Alkaline Phosphatase, subunit A"/>
    <property type="match status" value="1"/>
</dbReference>
<dbReference type="HAMAP" id="MF_01070">
    <property type="entry name" value="MdoB_OpgB"/>
    <property type="match status" value="1"/>
</dbReference>
<dbReference type="InterPro" id="IPR017850">
    <property type="entry name" value="Alkaline_phosphatase_core_sf"/>
</dbReference>
<dbReference type="InterPro" id="IPR054288">
    <property type="entry name" value="DUF7024"/>
</dbReference>
<dbReference type="InterPro" id="IPR020881">
    <property type="entry name" value="OpgB"/>
</dbReference>
<dbReference type="InterPro" id="IPR050448">
    <property type="entry name" value="OpgB/LTA_synthase_biosynth"/>
</dbReference>
<dbReference type="InterPro" id="IPR000917">
    <property type="entry name" value="Sulfatase_N"/>
</dbReference>
<dbReference type="NCBIfam" id="NF003000">
    <property type="entry name" value="PRK03776.1"/>
    <property type="match status" value="1"/>
</dbReference>
<dbReference type="PANTHER" id="PTHR47371">
    <property type="entry name" value="LIPOTEICHOIC ACID SYNTHASE"/>
    <property type="match status" value="1"/>
</dbReference>
<dbReference type="PANTHER" id="PTHR47371:SF3">
    <property type="entry name" value="PHOSPHOGLYCEROL TRANSFERASE I"/>
    <property type="match status" value="1"/>
</dbReference>
<dbReference type="Pfam" id="PF22895">
    <property type="entry name" value="DUF7024"/>
    <property type="match status" value="1"/>
</dbReference>
<dbReference type="Pfam" id="PF00884">
    <property type="entry name" value="Sulfatase"/>
    <property type="match status" value="1"/>
</dbReference>
<dbReference type="SUPFAM" id="SSF53649">
    <property type="entry name" value="Alkaline phosphatase-like"/>
    <property type="match status" value="1"/>
</dbReference>
<proteinExistence type="inferred from homology"/>
<protein>
    <recommendedName>
        <fullName>Phosphoglycerol transferase I</fullName>
        <ecNumber>2.7.8.20</ecNumber>
    </recommendedName>
    <alternativeName>
        <fullName>Phosphatidylglycerol--membrane-oligosaccharide glycerophosphotransferase</fullName>
    </alternativeName>
</protein>
<accession>P39401</accession>
<accession>Q2M5V7</accession>
<gene>
    <name type="primary">mdoB</name>
    <name type="synonym">opgB</name>
    <name type="synonym">yjjO</name>
    <name type="ordered locus">b4359</name>
    <name type="ordered locus">JW5794</name>
</gene>
<organism>
    <name type="scientific">Escherichia coli (strain K12)</name>
    <dbReference type="NCBI Taxonomy" id="83333"/>
    <lineage>
        <taxon>Bacteria</taxon>
        <taxon>Pseudomonadati</taxon>
        <taxon>Pseudomonadota</taxon>
        <taxon>Gammaproteobacteria</taxon>
        <taxon>Enterobacterales</taxon>
        <taxon>Enterobacteriaceae</taxon>
        <taxon>Escherichia</taxon>
    </lineage>
</organism>
<sequence length="763" mass="85494">MSELLSFALFLASVLIYAWKAGRNTWWFAATLTVLGLFVVLNITLFASDYFTGDGINDAVLYTLTNSLTGAGVSKYILPGIGIVLGLTAVFGALGWILRRRRHHPHHFGYSLLALLLALGSVDASPAFRQITELVKSQSRDGDPDFAAYYKEPSKTIPDPKLNLVYIYGESLERTYFDNEAFPDLTPELGALKNEGLDFSHTQQLPGTDYTIAGMVASQCGIPLFAPFEGNASASVSSFFPQNICLGDILKNSGYQNYFVQGANLRFAGKDVFLKSHGFDHLYGSEELKSVVADPHYRNDWGFYDDTVLDEAWKKFEELSRSGQRFSLFTLTVDTHHPDGFISRTCNRKKYDFDGKPNQSFSAVSCSQENIATFINKIKASPWFKDTVIVVSSDHLAMNNTAWKYLNKQDRNNLFFVIRGDKPQQETLAVKRNTMDNGATVLDILGGDNYLGLGRSSLSGQSMSEIFLNIKEKTLAWKPDIIRLWKFPKEMKEFTIDQQKNMIAFSGSHFRLPLLLRVSDKRVEPLPESEYSAPLRFQLADFAPRDNFVWVDRCYKMAQLWAPELALSTDWCVSQGQLGGQQIVQHVDKTTWQGKTAFKDTVIDMARYKGNVDTLKIVDNDIRYKADSFIFNVAGAPEEVKQFSGISRPESWGRWSNAQLGDEVKIEYKHPLPKKFDLVITAKAYGNNASRPIPVRVGNEEQTLVLGNEVTTTTLHFDNPTDADTLVIVPPEPVSTNEGNILGHSPRKLGIGMVEIKVVEREG</sequence>
<name>OPGB_ECOLI</name>
<reference key="1">
    <citation type="journal article" date="1995" name="Nucleic Acids Res.">
        <title>Analysis of the Escherichia coli genome VI: DNA sequence of the region from 92.8 through 100 minutes.</title>
        <authorList>
            <person name="Burland V.D."/>
            <person name="Plunkett G. III"/>
            <person name="Sofia H.J."/>
            <person name="Daniels D.L."/>
            <person name="Blattner F.R."/>
        </authorList>
    </citation>
    <scope>NUCLEOTIDE SEQUENCE [LARGE SCALE GENOMIC DNA]</scope>
    <source>
        <strain>K12 / MG1655 / ATCC 47076</strain>
    </source>
</reference>
<reference key="2">
    <citation type="journal article" date="1997" name="Science">
        <title>The complete genome sequence of Escherichia coli K-12.</title>
        <authorList>
            <person name="Blattner F.R."/>
            <person name="Plunkett G. III"/>
            <person name="Bloch C.A."/>
            <person name="Perna N.T."/>
            <person name="Burland V."/>
            <person name="Riley M."/>
            <person name="Collado-Vides J."/>
            <person name="Glasner J.D."/>
            <person name="Rode C.K."/>
            <person name="Mayhew G.F."/>
            <person name="Gregor J."/>
            <person name="Davis N.W."/>
            <person name="Kirkpatrick H.A."/>
            <person name="Goeden M.A."/>
            <person name="Rose D.J."/>
            <person name="Mau B."/>
            <person name="Shao Y."/>
        </authorList>
    </citation>
    <scope>NUCLEOTIDE SEQUENCE [LARGE SCALE GENOMIC DNA]</scope>
    <source>
        <strain>K12 / MG1655 / ATCC 47076</strain>
    </source>
</reference>
<reference key="3">
    <citation type="journal article" date="2006" name="Mol. Syst. Biol.">
        <title>Highly accurate genome sequences of Escherichia coli K-12 strains MG1655 and W3110.</title>
        <authorList>
            <person name="Hayashi K."/>
            <person name="Morooka N."/>
            <person name="Yamamoto Y."/>
            <person name="Fujita K."/>
            <person name="Isono K."/>
            <person name="Choi S."/>
            <person name="Ohtsubo E."/>
            <person name="Baba T."/>
            <person name="Wanner B.L."/>
            <person name="Mori H."/>
            <person name="Horiuchi T."/>
        </authorList>
    </citation>
    <scope>NUCLEOTIDE SEQUENCE [LARGE SCALE GENOMIC DNA]</scope>
    <source>
        <strain>K12 / W3110 / ATCC 27325 / DSM 5911</strain>
    </source>
</reference>
<reference key="4">
    <citation type="journal article" date="1984" name="J. Bacteriol.">
        <title>Biosynthesis of membrane-derived oligosaccharides: characterization of mdoB mutants defective in phosphoglycerol transferase I activity.</title>
        <authorList>
            <person name="Jackson B.J."/>
            <person name="Bohin J.-P."/>
            <person name="Kennedy E.P."/>
        </authorList>
    </citation>
    <scope>FUNCTION</scope>
</reference>
<reference key="5">
    <citation type="journal article" date="1985" name="J. Biol. Chem.">
        <title>Characterization of an Escherichia coli mdoB mutant strain unable to transfer sn-1-phosphoglycerol to membrane-derived oligosaccharides.</title>
        <authorList>
            <person name="Fiedler W."/>
            <person name="Rotering H."/>
        </authorList>
    </citation>
    <scope>FUNCTION</scope>
</reference>
<reference key="6">
    <citation type="journal article" date="2005" name="Science">
        <title>Global topology analysis of the Escherichia coli inner membrane proteome.</title>
        <authorList>
            <person name="Daley D.O."/>
            <person name="Rapp M."/>
            <person name="Granseth E."/>
            <person name="Melen K."/>
            <person name="Drew D."/>
            <person name="von Heijne G."/>
        </authorList>
    </citation>
    <scope>SUBCELLULAR LOCATION</scope>
    <source>
        <strain>K12 / MG1655 / ATCC 47076</strain>
    </source>
</reference>
<feature type="chain" id="PRO_0000213059" description="Phosphoglycerol transferase I">
    <location>
        <begin position="1"/>
        <end position="763"/>
    </location>
</feature>
<feature type="transmembrane region" description="Helical" evidence="1">
    <location>
        <begin position="1"/>
        <end position="21"/>
    </location>
</feature>
<feature type="transmembrane region" description="Helical" evidence="1">
    <location>
        <begin position="26"/>
        <end position="46"/>
    </location>
</feature>
<feature type="transmembrane region" description="Helical" evidence="1">
    <location>
        <begin position="77"/>
        <end position="97"/>
    </location>
</feature>
<feature type="transmembrane region" description="Helical" evidence="1">
    <location>
        <begin position="108"/>
        <end position="128"/>
    </location>
</feature>
<evidence type="ECO:0000255" key="1"/>
<evidence type="ECO:0000269" key="2">
    <source>
    </source>
</evidence>
<evidence type="ECO:0000269" key="3">
    <source>
    </source>
</evidence>
<evidence type="ECO:0000269" key="4">
    <source>
    </source>
</evidence>
<evidence type="ECO:0000305" key="5"/>
<keyword id="KW-0997">Cell inner membrane</keyword>
<keyword id="KW-1003">Cell membrane</keyword>
<keyword id="KW-0472">Membrane</keyword>
<keyword id="KW-1185">Reference proteome</keyword>
<keyword id="KW-0808">Transferase</keyword>
<keyword id="KW-0812">Transmembrane</keyword>
<keyword id="KW-1133">Transmembrane helix</keyword>
<comment type="function">
    <text evidence="3 4">Transfers a phosphoglycerol residue from phosphatidylglycerol to the membrane-bound nascent glucan backbones.</text>
</comment>
<comment type="catalytic activity">
    <reaction>
        <text>a phosphatidylglycerol + a membrane-derived-oligosaccharide D-glucose = a 1,2-diacyl-sn-glycerol + a membrane-derived-oligosaccharide 6-(glycerophospho)-D-glucose.</text>
        <dbReference type="EC" id="2.7.8.20"/>
    </reaction>
</comment>
<comment type="pathway">
    <text>Glycan metabolism; osmoregulated periplasmic glucan (OPG) biosynthesis.</text>
</comment>
<comment type="subcellular location">
    <subcellularLocation>
        <location evidence="2">Cell inner membrane</location>
        <topology evidence="2">Multi-pass membrane protein</topology>
    </subcellularLocation>
</comment>
<comment type="similarity">
    <text evidence="5">Belongs to the OpgB family.</text>
</comment>
<comment type="sequence caution" evidence="5">
    <conflict type="erroneous initiation">
        <sequence resource="EMBL-CDS" id="AAA97258"/>
    </conflict>
    <text>Truncated N-terminus.</text>
</comment>